<protein>
    <recommendedName>
        <fullName>DNA polymerase III subunit epsilon</fullName>
        <ecNumber>2.7.7.7</ecNumber>
    </recommendedName>
</protein>
<evidence type="ECO:0000250" key="1"/>
<evidence type="ECO:0000255" key="2"/>
<keyword id="KW-0235">DNA replication</keyword>
<keyword id="KW-0239">DNA-directed DNA polymerase</keyword>
<keyword id="KW-0269">Exonuclease</keyword>
<keyword id="KW-0378">Hydrolase</keyword>
<keyword id="KW-0460">Magnesium</keyword>
<keyword id="KW-0464">Manganese</keyword>
<keyword id="KW-0479">Metal-binding</keyword>
<keyword id="KW-0540">Nuclease</keyword>
<keyword id="KW-0548">Nucleotidyltransferase</keyword>
<keyword id="KW-1185">Reference proteome</keyword>
<keyword id="KW-0808">Transferase</keyword>
<accession>Q89AN3</accession>
<reference key="1">
    <citation type="journal article" date="2003" name="Proc. Natl. Acad. Sci. U.S.A.">
        <title>Reductive genome evolution in Buchnera aphidicola.</title>
        <authorList>
            <person name="van Ham R.C.H.J."/>
            <person name="Kamerbeek J."/>
            <person name="Palacios C."/>
            <person name="Rausell C."/>
            <person name="Abascal F."/>
            <person name="Bastolla U."/>
            <person name="Fernandez J.M."/>
            <person name="Jimenez L."/>
            <person name="Postigo M."/>
            <person name="Silva F.J."/>
            <person name="Tamames J."/>
            <person name="Viguera E."/>
            <person name="Latorre A."/>
            <person name="Valencia A."/>
            <person name="Moran F."/>
            <person name="Moya A."/>
        </authorList>
    </citation>
    <scope>NUCLEOTIDE SEQUENCE [LARGE SCALE GENOMIC DNA]</scope>
    <source>
        <strain>Bp</strain>
    </source>
</reference>
<dbReference type="EC" id="2.7.7.7"/>
<dbReference type="EMBL" id="AE016826">
    <property type="protein sequence ID" value="AAO26958.1"/>
    <property type="molecule type" value="Genomic_DNA"/>
</dbReference>
<dbReference type="RefSeq" id="WP_011091359.1">
    <property type="nucleotide sequence ID" value="NC_004545.1"/>
</dbReference>
<dbReference type="SMR" id="Q89AN3"/>
<dbReference type="STRING" id="224915.bbp_230"/>
<dbReference type="KEGG" id="bab:bbp_230"/>
<dbReference type="eggNOG" id="COG0847">
    <property type="taxonomic scope" value="Bacteria"/>
</dbReference>
<dbReference type="HOGENOM" id="CLU_047806_2_0_6"/>
<dbReference type="OrthoDB" id="9804290at2"/>
<dbReference type="Proteomes" id="UP000000601">
    <property type="component" value="Chromosome"/>
</dbReference>
<dbReference type="GO" id="GO:0005829">
    <property type="term" value="C:cytosol"/>
    <property type="evidence" value="ECO:0007669"/>
    <property type="project" value="TreeGrafter"/>
</dbReference>
<dbReference type="GO" id="GO:0008408">
    <property type="term" value="F:3'-5' exonuclease activity"/>
    <property type="evidence" value="ECO:0007669"/>
    <property type="project" value="TreeGrafter"/>
</dbReference>
<dbReference type="GO" id="GO:0003677">
    <property type="term" value="F:DNA binding"/>
    <property type="evidence" value="ECO:0007669"/>
    <property type="project" value="InterPro"/>
</dbReference>
<dbReference type="GO" id="GO:0003887">
    <property type="term" value="F:DNA-directed DNA polymerase activity"/>
    <property type="evidence" value="ECO:0007669"/>
    <property type="project" value="UniProtKB-KW"/>
</dbReference>
<dbReference type="GO" id="GO:0046872">
    <property type="term" value="F:metal ion binding"/>
    <property type="evidence" value="ECO:0007669"/>
    <property type="project" value="UniProtKB-KW"/>
</dbReference>
<dbReference type="GO" id="GO:0045004">
    <property type="term" value="P:DNA replication proofreading"/>
    <property type="evidence" value="ECO:0007669"/>
    <property type="project" value="TreeGrafter"/>
</dbReference>
<dbReference type="CDD" id="cd06131">
    <property type="entry name" value="DNA_pol_III_epsilon_Ecoli_like"/>
    <property type="match status" value="1"/>
</dbReference>
<dbReference type="FunFam" id="3.30.420.10:FF:000012">
    <property type="entry name" value="DNA polymerase III subunit epsilon"/>
    <property type="match status" value="1"/>
</dbReference>
<dbReference type="Gene3D" id="3.30.420.10">
    <property type="entry name" value="Ribonuclease H-like superfamily/Ribonuclease H"/>
    <property type="match status" value="1"/>
</dbReference>
<dbReference type="InterPro" id="IPR006054">
    <property type="entry name" value="DnaQ"/>
</dbReference>
<dbReference type="InterPro" id="IPR006309">
    <property type="entry name" value="DnaQ_proteo"/>
</dbReference>
<dbReference type="InterPro" id="IPR013520">
    <property type="entry name" value="Exonuclease_RNaseT/DNA_pol3"/>
</dbReference>
<dbReference type="InterPro" id="IPR012337">
    <property type="entry name" value="RNaseH-like_sf"/>
</dbReference>
<dbReference type="InterPro" id="IPR036397">
    <property type="entry name" value="RNaseH_sf"/>
</dbReference>
<dbReference type="NCBIfam" id="TIGR00573">
    <property type="entry name" value="dnaq"/>
    <property type="match status" value="1"/>
</dbReference>
<dbReference type="NCBIfam" id="TIGR01406">
    <property type="entry name" value="dnaQ_proteo"/>
    <property type="match status" value="1"/>
</dbReference>
<dbReference type="NCBIfam" id="NF004316">
    <property type="entry name" value="PRK05711.1"/>
    <property type="match status" value="1"/>
</dbReference>
<dbReference type="PANTHER" id="PTHR30231">
    <property type="entry name" value="DNA POLYMERASE III SUBUNIT EPSILON"/>
    <property type="match status" value="1"/>
</dbReference>
<dbReference type="PANTHER" id="PTHR30231:SF41">
    <property type="entry name" value="DNA POLYMERASE III SUBUNIT EPSILON"/>
    <property type="match status" value="1"/>
</dbReference>
<dbReference type="Pfam" id="PF00929">
    <property type="entry name" value="RNase_T"/>
    <property type="match status" value="1"/>
</dbReference>
<dbReference type="SMART" id="SM00479">
    <property type="entry name" value="EXOIII"/>
    <property type="match status" value="1"/>
</dbReference>
<dbReference type="SUPFAM" id="SSF53098">
    <property type="entry name" value="Ribonuclease H-like"/>
    <property type="match status" value="1"/>
</dbReference>
<sequence length="245" mass="28519">MKKYDRKIVLDIETTGMNPAGCFYKNHKIIEIGAVEMINNVFTGNNFHSYIQPNRLIDKQSFKIHGITDNFLLDKPKFHEISVKFLEYITNSDLIIHNAKFDVGFINYELNMINSDKRKISDYCNVVDTLPLARQLFPGKKNSLDALCNRYKINVSHRDFHSALIDAKLLAKVYTFMTSFQQSISIFDKNSNLNSIQKNAKLDSRVPFRSTLLLATKDELQQHMKYLKYVKQETGNCVWLEDKYN</sequence>
<comment type="function">
    <text evidence="1">DNA polymerase III is a complex, multichain enzyme responsible for most of the replicative synthesis in bacteria. The epsilon subunit contain the editing function and is a proofreading 3'-5' exonuclease (By similarity).</text>
</comment>
<comment type="catalytic activity">
    <reaction>
        <text>DNA(n) + a 2'-deoxyribonucleoside 5'-triphosphate = DNA(n+1) + diphosphate</text>
        <dbReference type="Rhea" id="RHEA:22508"/>
        <dbReference type="Rhea" id="RHEA-COMP:17339"/>
        <dbReference type="Rhea" id="RHEA-COMP:17340"/>
        <dbReference type="ChEBI" id="CHEBI:33019"/>
        <dbReference type="ChEBI" id="CHEBI:61560"/>
        <dbReference type="ChEBI" id="CHEBI:173112"/>
        <dbReference type="EC" id="2.7.7.7"/>
    </reaction>
</comment>
<comment type="cofactor">
    <cofactor evidence="1">
        <name>Mg(2+)</name>
        <dbReference type="ChEBI" id="CHEBI:18420"/>
    </cofactor>
    <cofactor evidence="1">
        <name>Mn(2+)</name>
        <dbReference type="ChEBI" id="CHEBI:29035"/>
    </cofactor>
    <text evidence="1">Binds 2 divalent metal cations. Magnesium or manganese.</text>
</comment>
<comment type="subunit">
    <text evidence="1">The DNA polymerase holoenzyme is a complex that contains 10 different types of subunits. These subunits are organized into 3 functionally essential subassemblies: the pol III core, the beta sliding clamp processivity factor and the clamp-loading complex. The pol III core (subunits alpha,epsilon and theta) contains the polymerase and the 3'-5' exonuclease proofreading activities. The polymerase is tethered to the template via the sliding clamp processivity factor. The clamp-loading complex assembles the beta processivity factor onto the primer template and plays a central role in the organization and communication at the replication fork. This complex contains delta, delta', psi and chi, and copies of either or both of two different DnaX proteins, gamma and tau. The composition of the holoenzyme is, therefore: (alpha,epsilon,theta)[2]-(gamma/tau)[3]-delta,delta', psi,chi-beta[4] (By similarity).</text>
</comment>
<gene>
    <name type="primary">dnaQ</name>
    <name type="ordered locus">bbp_230</name>
</gene>
<name>DPO3E_BUCBP</name>
<feature type="chain" id="PRO_0000105482" description="DNA polymerase III subunit epsilon">
    <location>
        <begin position="1"/>
        <end position="245"/>
    </location>
</feature>
<feature type="active site" description="Proton acceptor" evidence="1">
    <location>
        <position position="161"/>
    </location>
</feature>
<feature type="binding site" evidence="1">
    <location>
        <position position="11"/>
    </location>
    <ligand>
        <name>a divalent metal cation</name>
        <dbReference type="ChEBI" id="CHEBI:60240"/>
        <label>1</label>
        <note>catalytic</note>
    </ligand>
</feature>
<feature type="binding site" evidence="1">
    <location>
        <position position="11"/>
    </location>
    <ligand>
        <name>a divalent metal cation</name>
        <dbReference type="ChEBI" id="CHEBI:60240"/>
        <label>2</label>
        <note>catalytic</note>
    </ligand>
</feature>
<feature type="binding site" evidence="1">
    <location>
        <position position="11"/>
    </location>
    <ligand>
        <name>substrate</name>
    </ligand>
</feature>
<feature type="binding site" evidence="1">
    <location>
        <position position="13"/>
    </location>
    <ligand>
        <name>a divalent metal cation</name>
        <dbReference type="ChEBI" id="CHEBI:60240"/>
        <label>1</label>
        <note>catalytic</note>
    </ligand>
</feature>
<feature type="binding site" evidence="1">
    <location>
        <position position="13"/>
    </location>
    <ligand>
        <name>substrate</name>
    </ligand>
</feature>
<feature type="binding site" evidence="2">
    <location>
        <position position="60"/>
    </location>
    <ligand>
        <name>substrate</name>
    </ligand>
</feature>
<feature type="binding site" evidence="1">
    <location>
        <position position="65"/>
    </location>
    <ligand>
        <name>substrate</name>
    </ligand>
</feature>
<feature type="binding site" evidence="1">
    <location>
        <position position="166"/>
    </location>
    <ligand>
        <name>a divalent metal cation</name>
        <dbReference type="ChEBI" id="CHEBI:60240"/>
        <label>1</label>
        <note>catalytic</note>
    </ligand>
</feature>
<feature type="binding site" evidence="1">
    <location>
        <position position="166"/>
    </location>
    <ligand>
        <name>substrate</name>
    </ligand>
</feature>
<organism>
    <name type="scientific">Buchnera aphidicola subsp. Baizongia pistaciae (strain Bp)</name>
    <dbReference type="NCBI Taxonomy" id="224915"/>
    <lineage>
        <taxon>Bacteria</taxon>
        <taxon>Pseudomonadati</taxon>
        <taxon>Pseudomonadota</taxon>
        <taxon>Gammaproteobacteria</taxon>
        <taxon>Enterobacterales</taxon>
        <taxon>Erwiniaceae</taxon>
        <taxon>Buchnera</taxon>
    </lineage>
</organism>
<proteinExistence type="inferred from homology"/>